<dbReference type="EC" id="3.1.-.-" evidence="1"/>
<dbReference type="EMBL" id="CU928158">
    <property type="protein sequence ID" value="CAQ90381.1"/>
    <property type="molecule type" value="Genomic_DNA"/>
</dbReference>
<dbReference type="SMR" id="B7LPR6"/>
<dbReference type="KEGG" id="efe:EFER_2888"/>
<dbReference type="HOGENOM" id="CLU_098240_3_0_6"/>
<dbReference type="OrthoDB" id="9796140at2"/>
<dbReference type="Proteomes" id="UP000000745">
    <property type="component" value="Chromosome"/>
</dbReference>
<dbReference type="GO" id="GO:0005829">
    <property type="term" value="C:cytosol"/>
    <property type="evidence" value="ECO:0007669"/>
    <property type="project" value="TreeGrafter"/>
</dbReference>
<dbReference type="GO" id="GO:0004518">
    <property type="term" value="F:nuclease activity"/>
    <property type="evidence" value="ECO:0007669"/>
    <property type="project" value="UniProtKB-KW"/>
</dbReference>
<dbReference type="GO" id="GO:0000967">
    <property type="term" value="P:rRNA 5'-end processing"/>
    <property type="evidence" value="ECO:0007669"/>
    <property type="project" value="UniProtKB-UniRule"/>
</dbReference>
<dbReference type="CDD" id="cd16964">
    <property type="entry name" value="YqgF"/>
    <property type="match status" value="1"/>
</dbReference>
<dbReference type="FunFam" id="3.30.420.140:FF:000002">
    <property type="entry name" value="Putative pre-16S rRNA nuclease"/>
    <property type="match status" value="1"/>
</dbReference>
<dbReference type="Gene3D" id="3.30.420.140">
    <property type="entry name" value="YqgF/RNase H-like domain"/>
    <property type="match status" value="1"/>
</dbReference>
<dbReference type="HAMAP" id="MF_00651">
    <property type="entry name" value="Nuclease_YqgF"/>
    <property type="match status" value="1"/>
</dbReference>
<dbReference type="InterPro" id="IPR012337">
    <property type="entry name" value="RNaseH-like_sf"/>
</dbReference>
<dbReference type="InterPro" id="IPR005227">
    <property type="entry name" value="YqgF"/>
</dbReference>
<dbReference type="InterPro" id="IPR006641">
    <property type="entry name" value="YqgF/RNaseH-like_dom"/>
</dbReference>
<dbReference type="InterPro" id="IPR037027">
    <property type="entry name" value="YqgF/RNaseH-like_dom_sf"/>
</dbReference>
<dbReference type="NCBIfam" id="TIGR00250">
    <property type="entry name" value="RNAse_H_YqgF"/>
    <property type="match status" value="1"/>
</dbReference>
<dbReference type="PANTHER" id="PTHR33317">
    <property type="entry name" value="POLYNUCLEOTIDYL TRANSFERASE, RIBONUCLEASE H-LIKE SUPERFAMILY PROTEIN"/>
    <property type="match status" value="1"/>
</dbReference>
<dbReference type="PANTHER" id="PTHR33317:SF4">
    <property type="entry name" value="POLYNUCLEOTIDYL TRANSFERASE, RIBONUCLEASE H-LIKE SUPERFAMILY PROTEIN"/>
    <property type="match status" value="1"/>
</dbReference>
<dbReference type="Pfam" id="PF03652">
    <property type="entry name" value="RuvX"/>
    <property type="match status" value="1"/>
</dbReference>
<dbReference type="SMART" id="SM00732">
    <property type="entry name" value="YqgFc"/>
    <property type="match status" value="1"/>
</dbReference>
<dbReference type="SUPFAM" id="SSF53098">
    <property type="entry name" value="Ribonuclease H-like"/>
    <property type="match status" value="1"/>
</dbReference>
<feature type="chain" id="PRO_1000131035" description="Putative pre-16S rRNA nuclease">
    <location>
        <begin position="1"/>
        <end position="138"/>
    </location>
</feature>
<organism>
    <name type="scientific">Escherichia fergusonii (strain ATCC 35469 / DSM 13698 / CCUG 18766 / IAM 14443 / JCM 21226 / LMG 7866 / NBRC 102419 / NCTC 12128 / CDC 0568-73)</name>
    <dbReference type="NCBI Taxonomy" id="585054"/>
    <lineage>
        <taxon>Bacteria</taxon>
        <taxon>Pseudomonadati</taxon>
        <taxon>Pseudomonadota</taxon>
        <taxon>Gammaproteobacteria</taxon>
        <taxon>Enterobacterales</taxon>
        <taxon>Enterobacteriaceae</taxon>
        <taxon>Escherichia</taxon>
    </lineage>
</organism>
<protein>
    <recommendedName>
        <fullName evidence="1">Putative pre-16S rRNA nuclease</fullName>
        <ecNumber evidence="1">3.1.-.-</ecNumber>
    </recommendedName>
</protein>
<comment type="function">
    <text evidence="1">Could be a nuclease involved in processing of the 5'-end of pre-16S rRNA.</text>
</comment>
<comment type="subcellular location">
    <subcellularLocation>
        <location evidence="1">Cytoplasm</location>
    </subcellularLocation>
</comment>
<comment type="similarity">
    <text evidence="1">Belongs to the YqgF nuclease family.</text>
</comment>
<reference key="1">
    <citation type="journal article" date="2009" name="PLoS Genet.">
        <title>Organised genome dynamics in the Escherichia coli species results in highly diverse adaptive paths.</title>
        <authorList>
            <person name="Touchon M."/>
            <person name="Hoede C."/>
            <person name="Tenaillon O."/>
            <person name="Barbe V."/>
            <person name="Baeriswyl S."/>
            <person name="Bidet P."/>
            <person name="Bingen E."/>
            <person name="Bonacorsi S."/>
            <person name="Bouchier C."/>
            <person name="Bouvet O."/>
            <person name="Calteau A."/>
            <person name="Chiapello H."/>
            <person name="Clermont O."/>
            <person name="Cruveiller S."/>
            <person name="Danchin A."/>
            <person name="Diard M."/>
            <person name="Dossat C."/>
            <person name="Karoui M.E."/>
            <person name="Frapy E."/>
            <person name="Garry L."/>
            <person name="Ghigo J.M."/>
            <person name="Gilles A.M."/>
            <person name="Johnson J."/>
            <person name="Le Bouguenec C."/>
            <person name="Lescat M."/>
            <person name="Mangenot S."/>
            <person name="Martinez-Jehanne V."/>
            <person name="Matic I."/>
            <person name="Nassif X."/>
            <person name="Oztas S."/>
            <person name="Petit M.A."/>
            <person name="Pichon C."/>
            <person name="Rouy Z."/>
            <person name="Ruf C.S."/>
            <person name="Schneider D."/>
            <person name="Tourret J."/>
            <person name="Vacherie B."/>
            <person name="Vallenet D."/>
            <person name="Medigue C."/>
            <person name="Rocha E.P.C."/>
            <person name="Denamur E."/>
        </authorList>
    </citation>
    <scope>NUCLEOTIDE SEQUENCE [LARGE SCALE GENOMIC DNA]</scope>
    <source>
        <strain>ATCC 35469 / DSM 13698 / BCRC 15582 / CCUG 18766 / IAM 14443 / JCM 21226 / LMG 7866 / NBRC 102419 / NCTC 12128 / CDC 0568-73</strain>
    </source>
</reference>
<evidence type="ECO:0000255" key="1">
    <source>
        <dbReference type="HAMAP-Rule" id="MF_00651"/>
    </source>
</evidence>
<proteinExistence type="inferred from homology"/>
<keyword id="KW-0963">Cytoplasm</keyword>
<keyword id="KW-0378">Hydrolase</keyword>
<keyword id="KW-0540">Nuclease</keyword>
<keyword id="KW-0690">Ribosome biogenesis</keyword>
<sequence>MSGTLLAFDFGTKSIGVAVGQRITGTARPLPAIKAQDGTPDWNLIERLLKEWQPDEIIVGLPLNMDGTEQPLTARARKFANRIHGRFGVEVKLHDERLSTVEARSGLFEQGGYRALNKGKVDSASAVIILESYFEQGY</sequence>
<gene>
    <name evidence="1" type="primary">yqgF</name>
    <name type="ordered locus">EFER_2888</name>
</gene>
<name>YQGF_ESCF3</name>
<accession>B7LPR6</accession>